<feature type="chain" id="PRO_0000447580" description="Protein PALS1">
    <location>
        <begin position="1"/>
        <end position="675"/>
    </location>
</feature>
<feature type="domain" description="L27 1" evidence="7">
    <location>
        <begin position="120"/>
        <end position="177"/>
    </location>
</feature>
<feature type="domain" description="L27 2" evidence="7">
    <location>
        <begin position="179"/>
        <end position="235"/>
    </location>
</feature>
<feature type="domain" description="PDZ" evidence="5">
    <location>
        <begin position="256"/>
        <end position="336"/>
    </location>
</feature>
<feature type="domain" description="SH3" evidence="6">
    <location>
        <begin position="345"/>
        <end position="417"/>
    </location>
</feature>
<feature type="domain" description="Guanylate kinase-like" evidence="4">
    <location>
        <begin position="479"/>
        <end position="660"/>
    </location>
</feature>
<feature type="region of interest" description="Required for the correct localization of PALS1 and PATJ at cell-cell contacts and the normal formation of tight junctions and adherens junctions" evidence="3">
    <location>
        <begin position="1"/>
        <end position="345"/>
    </location>
</feature>
<feature type="region of interest" description="Disordered" evidence="8">
    <location>
        <begin position="1"/>
        <end position="32"/>
    </location>
</feature>
<feature type="region of interest" description="Interaction with PARD6B" evidence="3">
    <location>
        <begin position="21"/>
        <end position="140"/>
    </location>
</feature>
<feature type="region of interest" description="Disordered" evidence="8">
    <location>
        <begin position="52"/>
        <end position="79"/>
    </location>
</feature>
<feature type="region of interest" description="Interaction with LIN7C" evidence="3">
    <location>
        <begin position="181"/>
        <end position="243"/>
    </location>
</feature>
<feature type="compositionally biased region" description="Basic and acidic residues" evidence="8">
    <location>
        <begin position="54"/>
        <end position="79"/>
    </location>
</feature>
<feature type="binding site" evidence="4">
    <location>
        <begin position="486"/>
        <end position="493"/>
    </location>
    <ligand>
        <name>ATP</name>
        <dbReference type="ChEBI" id="CHEBI:30616"/>
    </ligand>
</feature>
<feature type="modified residue" description="Phosphoserine" evidence="2">
    <location>
        <position position="14"/>
    </location>
</feature>
<feature type="modified residue" description="Phosphoserine" evidence="3">
    <location>
        <position position="25"/>
    </location>
</feature>
<feature type="modified residue" description="Phosphoserine" evidence="2">
    <location>
        <position position="83"/>
    </location>
</feature>
<feature type="modified residue" description="Phosphoserine" evidence="2">
    <location>
        <position position="84"/>
    </location>
</feature>
<dbReference type="EMBL" id="AABR07073239">
    <property type="status" value="NOT_ANNOTATED_CDS"/>
    <property type="molecule type" value="Genomic_DNA"/>
</dbReference>
<dbReference type="EMBL" id="AC120917">
    <property type="status" value="NOT_ANNOTATED_CDS"/>
    <property type="molecule type" value="Genomic_DNA"/>
</dbReference>
<dbReference type="EMBL" id="AC139976">
    <property type="status" value="NOT_ANNOTATED_CDS"/>
    <property type="molecule type" value="Genomic_DNA"/>
</dbReference>
<dbReference type="EMBL" id="CH473947">
    <property type="protein sequence ID" value="EDM03700.1"/>
    <property type="molecule type" value="Genomic_DNA"/>
</dbReference>
<dbReference type="EMBL" id="BC168247">
    <property type="protein sequence ID" value="AAI68247.1"/>
    <property type="molecule type" value="mRNA"/>
</dbReference>
<dbReference type="RefSeq" id="NP_001101504.1">
    <property type="nucleotide sequence ID" value="NM_001108034.1"/>
</dbReference>
<dbReference type="RefSeq" id="XP_006240320.1">
    <property type="nucleotide sequence ID" value="XM_006240258.2"/>
</dbReference>
<dbReference type="RefSeq" id="XP_008762995.1">
    <property type="nucleotide sequence ID" value="XM_008764773.2"/>
</dbReference>
<dbReference type="SMR" id="B4F7E7"/>
<dbReference type="FunCoup" id="B4F7E7">
    <property type="interactions" value="1669"/>
</dbReference>
<dbReference type="IntAct" id="B4F7E7">
    <property type="interactions" value="3"/>
</dbReference>
<dbReference type="STRING" id="10116.ENSRNOP00000012005"/>
<dbReference type="iPTMnet" id="B4F7E7"/>
<dbReference type="PhosphoSitePlus" id="B4F7E7"/>
<dbReference type="jPOST" id="B4F7E7"/>
<dbReference type="PaxDb" id="10116-ENSRNOP00000012005"/>
<dbReference type="PeptideAtlas" id="B4F7E7"/>
<dbReference type="Ensembl" id="ENSRNOT00000092157.2">
    <property type="protein sequence ID" value="ENSRNOP00000070368.1"/>
    <property type="gene ID" value="ENSRNOG00000008788.6"/>
</dbReference>
<dbReference type="GeneID" id="314259"/>
<dbReference type="KEGG" id="rno:314259"/>
<dbReference type="UCSC" id="RGD:1308071">
    <property type="organism name" value="rat"/>
</dbReference>
<dbReference type="AGR" id="RGD:1308071"/>
<dbReference type="CTD" id="64398"/>
<dbReference type="RGD" id="1308071">
    <property type="gene designation" value="Pals1"/>
</dbReference>
<dbReference type="eggNOG" id="KOG0609">
    <property type="taxonomic scope" value="Eukaryota"/>
</dbReference>
<dbReference type="GeneTree" id="ENSGT00940000156087"/>
<dbReference type="HOGENOM" id="CLU_001715_5_4_1"/>
<dbReference type="InParanoid" id="B4F7E7"/>
<dbReference type="OMA" id="FSHRTMT"/>
<dbReference type="OrthoDB" id="43580at2759"/>
<dbReference type="PhylomeDB" id="B4F7E7"/>
<dbReference type="TreeFam" id="TF314263"/>
<dbReference type="PRO" id="PR:B4F7E7"/>
<dbReference type="Proteomes" id="UP000002494">
    <property type="component" value="Chromosome 6"/>
</dbReference>
<dbReference type="Proteomes" id="UP000234681">
    <property type="component" value="Chromosome 6"/>
</dbReference>
<dbReference type="Bgee" id="ENSRNOG00000008788">
    <property type="expression patterns" value="Expressed in lung and 19 other cell types or tissues"/>
</dbReference>
<dbReference type="GO" id="GO:0005912">
    <property type="term" value="C:adherens junction"/>
    <property type="evidence" value="ECO:0000250"/>
    <property type="project" value="UniProtKB"/>
</dbReference>
<dbReference type="GO" id="GO:0045177">
    <property type="term" value="C:apical part of cell"/>
    <property type="evidence" value="ECO:0000266"/>
    <property type="project" value="RGD"/>
</dbReference>
<dbReference type="GO" id="GO:0016324">
    <property type="term" value="C:apical plasma membrane"/>
    <property type="evidence" value="ECO:0007669"/>
    <property type="project" value="UniProtKB-SubCell"/>
</dbReference>
<dbReference type="GO" id="GO:0030424">
    <property type="term" value="C:axon"/>
    <property type="evidence" value="ECO:0007669"/>
    <property type="project" value="UniProtKB-SubCell"/>
</dbReference>
<dbReference type="GO" id="GO:0005923">
    <property type="term" value="C:bicellular tight junction"/>
    <property type="evidence" value="ECO:0007669"/>
    <property type="project" value="UniProtKB-SubCell"/>
</dbReference>
<dbReference type="GO" id="GO:0005794">
    <property type="term" value="C:Golgi apparatus"/>
    <property type="evidence" value="ECO:0007669"/>
    <property type="project" value="UniProtKB-SubCell"/>
</dbReference>
<dbReference type="GO" id="GO:0043219">
    <property type="term" value="C:lateral loop"/>
    <property type="evidence" value="ECO:0000266"/>
    <property type="project" value="RGD"/>
</dbReference>
<dbReference type="GO" id="GO:0035749">
    <property type="term" value="C:myelin sheath adaxonal region"/>
    <property type="evidence" value="ECO:0000266"/>
    <property type="project" value="RGD"/>
</dbReference>
<dbReference type="GO" id="GO:0043204">
    <property type="term" value="C:perikaryon"/>
    <property type="evidence" value="ECO:0007669"/>
    <property type="project" value="UniProtKB-SubCell"/>
</dbReference>
<dbReference type="GO" id="GO:0005886">
    <property type="term" value="C:plasma membrane"/>
    <property type="evidence" value="ECO:0000266"/>
    <property type="project" value="RGD"/>
</dbReference>
<dbReference type="GO" id="GO:0032991">
    <property type="term" value="C:protein-containing complex"/>
    <property type="evidence" value="ECO:0000314"/>
    <property type="project" value="RGD"/>
</dbReference>
<dbReference type="GO" id="GO:0043220">
    <property type="term" value="C:Schmidt-Lanterman incisure"/>
    <property type="evidence" value="ECO:0000266"/>
    <property type="project" value="RGD"/>
</dbReference>
<dbReference type="GO" id="GO:0005524">
    <property type="term" value="F:ATP binding"/>
    <property type="evidence" value="ECO:0007669"/>
    <property type="project" value="UniProtKB-KW"/>
</dbReference>
<dbReference type="GO" id="GO:0042802">
    <property type="term" value="F:identical protein binding"/>
    <property type="evidence" value="ECO:0000266"/>
    <property type="project" value="RGD"/>
</dbReference>
<dbReference type="GO" id="GO:0016301">
    <property type="term" value="F:kinase activity"/>
    <property type="evidence" value="ECO:0007669"/>
    <property type="project" value="UniProtKB-KW"/>
</dbReference>
<dbReference type="GO" id="GO:0019904">
    <property type="term" value="F:protein domain specific binding"/>
    <property type="evidence" value="ECO:0000266"/>
    <property type="project" value="RGD"/>
</dbReference>
<dbReference type="GO" id="GO:0021954">
    <property type="term" value="P:central nervous system neuron development"/>
    <property type="evidence" value="ECO:0000250"/>
    <property type="project" value="UniProtKB"/>
</dbReference>
<dbReference type="GO" id="GO:0021987">
    <property type="term" value="P:cerebral cortex development"/>
    <property type="evidence" value="ECO:0000250"/>
    <property type="project" value="UniProtKB"/>
</dbReference>
<dbReference type="GO" id="GO:0045197">
    <property type="term" value="P:establishment or maintenance of epithelial cell apical/basal polarity"/>
    <property type="evidence" value="ECO:0000318"/>
    <property type="project" value="GO_Central"/>
</dbReference>
<dbReference type="GO" id="GO:0016332">
    <property type="term" value="P:establishment or maintenance of polarity of embryonic epithelium"/>
    <property type="evidence" value="ECO:0000318"/>
    <property type="project" value="GO_Central"/>
</dbReference>
<dbReference type="GO" id="GO:0010467">
    <property type="term" value="P:gene expression"/>
    <property type="evidence" value="ECO:0000266"/>
    <property type="project" value="RGD"/>
</dbReference>
<dbReference type="GO" id="GO:0048699">
    <property type="term" value="P:generation of neurons"/>
    <property type="evidence" value="ECO:0000318"/>
    <property type="project" value="GO_Central"/>
</dbReference>
<dbReference type="GO" id="GO:0002011">
    <property type="term" value="P:morphogenesis of an epithelial sheet"/>
    <property type="evidence" value="ECO:0000266"/>
    <property type="project" value="RGD"/>
</dbReference>
<dbReference type="GO" id="GO:0032288">
    <property type="term" value="P:myelin assembly"/>
    <property type="evidence" value="ECO:0000315"/>
    <property type="project" value="BHF-UCL"/>
</dbReference>
<dbReference type="GO" id="GO:0032287">
    <property type="term" value="P:peripheral nervous system myelin maintenance"/>
    <property type="evidence" value="ECO:0000266"/>
    <property type="project" value="RGD"/>
</dbReference>
<dbReference type="GO" id="GO:0007009">
    <property type="term" value="P:plasma membrane organization"/>
    <property type="evidence" value="ECO:0000266"/>
    <property type="project" value="RGD"/>
</dbReference>
<dbReference type="GO" id="GO:0008104">
    <property type="term" value="P:protein localization"/>
    <property type="evidence" value="ECO:0000266"/>
    <property type="project" value="RGD"/>
</dbReference>
<dbReference type="GO" id="GO:0035750">
    <property type="term" value="P:protein localization to myelin sheath abaxonal region"/>
    <property type="evidence" value="ECO:0000266"/>
    <property type="project" value="RGD"/>
</dbReference>
<dbReference type="GO" id="GO:0072659">
    <property type="term" value="P:protein localization to plasma membrane"/>
    <property type="evidence" value="ECO:0000315"/>
    <property type="project" value="BHF-UCL"/>
</dbReference>
<dbReference type="GO" id="GO:0017015">
    <property type="term" value="P:regulation of transforming growth factor beta receptor signaling pathway"/>
    <property type="evidence" value="ECO:0000250"/>
    <property type="project" value="UniProtKB"/>
</dbReference>
<dbReference type="CDD" id="cd00071">
    <property type="entry name" value="GMPK"/>
    <property type="match status" value="1"/>
</dbReference>
<dbReference type="CDD" id="cd06798">
    <property type="entry name" value="PDZ_MPP5-like"/>
    <property type="match status" value="1"/>
</dbReference>
<dbReference type="CDD" id="cd12036">
    <property type="entry name" value="SH3_MPP5"/>
    <property type="match status" value="1"/>
</dbReference>
<dbReference type="FunFam" id="2.30.30.40:FF:000105">
    <property type="entry name" value="MAGUK p55 subfamily member 5"/>
    <property type="match status" value="1"/>
</dbReference>
<dbReference type="FunFam" id="2.30.42.10:FF:000088">
    <property type="entry name" value="MAGUK p55 subfamily member 5"/>
    <property type="match status" value="1"/>
</dbReference>
<dbReference type="FunFam" id="3.40.50.300:FF:000469">
    <property type="entry name" value="MAGUK p55 subfamily member 5"/>
    <property type="match status" value="1"/>
</dbReference>
<dbReference type="Gene3D" id="2.30.42.10">
    <property type="match status" value="1"/>
</dbReference>
<dbReference type="Gene3D" id="1.10.287.650">
    <property type="entry name" value="L27 domain"/>
    <property type="match status" value="2"/>
</dbReference>
<dbReference type="Gene3D" id="3.40.50.300">
    <property type="entry name" value="P-loop containing nucleotide triphosphate hydrolases"/>
    <property type="match status" value="1"/>
</dbReference>
<dbReference type="Gene3D" id="2.30.30.40">
    <property type="entry name" value="SH3 Domains"/>
    <property type="match status" value="1"/>
</dbReference>
<dbReference type="InterPro" id="IPR008145">
    <property type="entry name" value="GK/Ca_channel_bsu"/>
</dbReference>
<dbReference type="InterPro" id="IPR008144">
    <property type="entry name" value="Guanylate_kin-like_dom"/>
</dbReference>
<dbReference type="InterPro" id="IPR020590">
    <property type="entry name" value="Guanylate_kinase_CS"/>
</dbReference>
<dbReference type="InterPro" id="IPR014775">
    <property type="entry name" value="L27_C"/>
</dbReference>
<dbReference type="InterPro" id="IPR004172">
    <property type="entry name" value="L27_dom"/>
</dbReference>
<dbReference type="InterPro" id="IPR036892">
    <property type="entry name" value="L27_dom_sf"/>
</dbReference>
<dbReference type="InterPro" id="IPR015145">
    <property type="entry name" value="L27_N"/>
</dbReference>
<dbReference type="InterPro" id="IPR050716">
    <property type="entry name" value="MAGUK"/>
</dbReference>
<dbReference type="InterPro" id="IPR035601">
    <property type="entry name" value="MPP5_SH3"/>
</dbReference>
<dbReference type="InterPro" id="IPR027417">
    <property type="entry name" value="P-loop_NTPase"/>
</dbReference>
<dbReference type="InterPro" id="IPR001478">
    <property type="entry name" value="PDZ"/>
</dbReference>
<dbReference type="InterPro" id="IPR036034">
    <property type="entry name" value="PDZ_sf"/>
</dbReference>
<dbReference type="InterPro" id="IPR036028">
    <property type="entry name" value="SH3-like_dom_sf"/>
</dbReference>
<dbReference type="InterPro" id="IPR001452">
    <property type="entry name" value="SH3_domain"/>
</dbReference>
<dbReference type="PANTHER" id="PTHR23122">
    <property type="entry name" value="MEMBRANE-ASSOCIATED GUANYLATE KINASE MAGUK"/>
    <property type="match status" value="1"/>
</dbReference>
<dbReference type="Pfam" id="PF00625">
    <property type="entry name" value="Guanylate_kin"/>
    <property type="match status" value="1"/>
</dbReference>
<dbReference type="Pfam" id="PF02828">
    <property type="entry name" value="L27"/>
    <property type="match status" value="1"/>
</dbReference>
<dbReference type="Pfam" id="PF09060">
    <property type="entry name" value="L27_N"/>
    <property type="match status" value="1"/>
</dbReference>
<dbReference type="Pfam" id="PF00595">
    <property type="entry name" value="PDZ"/>
    <property type="match status" value="1"/>
</dbReference>
<dbReference type="Pfam" id="PF07653">
    <property type="entry name" value="SH3_2"/>
    <property type="match status" value="1"/>
</dbReference>
<dbReference type="SMART" id="SM00072">
    <property type="entry name" value="GuKc"/>
    <property type="match status" value="1"/>
</dbReference>
<dbReference type="SMART" id="SM00569">
    <property type="entry name" value="L27"/>
    <property type="match status" value="2"/>
</dbReference>
<dbReference type="SMART" id="SM00228">
    <property type="entry name" value="PDZ"/>
    <property type="match status" value="1"/>
</dbReference>
<dbReference type="SMART" id="SM00326">
    <property type="entry name" value="SH3"/>
    <property type="match status" value="1"/>
</dbReference>
<dbReference type="SUPFAM" id="SSF101288">
    <property type="entry name" value="L27 domain"/>
    <property type="match status" value="2"/>
</dbReference>
<dbReference type="SUPFAM" id="SSF52540">
    <property type="entry name" value="P-loop containing nucleoside triphosphate hydrolases"/>
    <property type="match status" value="1"/>
</dbReference>
<dbReference type="SUPFAM" id="SSF50156">
    <property type="entry name" value="PDZ domain-like"/>
    <property type="match status" value="1"/>
</dbReference>
<dbReference type="SUPFAM" id="SSF50044">
    <property type="entry name" value="SH3-domain"/>
    <property type="match status" value="1"/>
</dbReference>
<dbReference type="PROSITE" id="PS00856">
    <property type="entry name" value="GUANYLATE_KINASE_1"/>
    <property type="match status" value="1"/>
</dbReference>
<dbReference type="PROSITE" id="PS50052">
    <property type="entry name" value="GUANYLATE_KINASE_2"/>
    <property type="match status" value="1"/>
</dbReference>
<dbReference type="PROSITE" id="PS51022">
    <property type="entry name" value="L27"/>
    <property type="match status" value="2"/>
</dbReference>
<dbReference type="PROSITE" id="PS50106">
    <property type="entry name" value="PDZ"/>
    <property type="match status" value="1"/>
</dbReference>
<dbReference type="PROSITE" id="PS50002">
    <property type="entry name" value="SH3"/>
    <property type="match status" value="1"/>
</dbReference>
<reference evidence="14" key="1">
    <citation type="journal article" date="2004" name="Nature">
        <title>Genome sequence of the Brown Norway rat yields insights into mammalian evolution.</title>
        <authorList>
            <person name="Gibbs R.A."/>
            <person name="Weinstock G.M."/>
            <person name="Metzker M.L."/>
            <person name="Muzny D.M."/>
            <person name="Sodergren E.J."/>
            <person name="Scherer S."/>
            <person name="Scott G."/>
            <person name="Steffen D."/>
            <person name="Worley K.C."/>
            <person name="Burch P.E."/>
            <person name="Okwuonu G."/>
            <person name="Hines S."/>
            <person name="Lewis L."/>
            <person name="Deramo C."/>
            <person name="Delgado O."/>
            <person name="Dugan-Rocha S."/>
            <person name="Miner G."/>
            <person name="Morgan M."/>
            <person name="Hawes A."/>
            <person name="Gill R."/>
            <person name="Holt R.A."/>
            <person name="Adams M.D."/>
            <person name="Amanatides P.G."/>
            <person name="Baden-Tillson H."/>
            <person name="Barnstead M."/>
            <person name="Chin S."/>
            <person name="Evans C.A."/>
            <person name="Ferriera S."/>
            <person name="Fosler C."/>
            <person name="Glodek A."/>
            <person name="Gu Z."/>
            <person name="Jennings D."/>
            <person name="Kraft C.L."/>
            <person name="Nguyen T."/>
            <person name="Pfannkoch C.M."/>
            <person name="Sitter C."/>
            <person name="Sutton G.G."/>
            <person name="Venter J.C."/>
            <person name="Woodage T."/>
            <person name="Smith D."/>
            <person name="Lee H.-M."/>
            <person name="Gustafson E."/>
            <person name="Cahill P."/>
            <person name="Kana A."/>
            <person name="Doucette-Stamm L."/>
            <person name="Weinstock K."/>
            <person name="Fechtel K."/>
            <person name="Weiss R.B."/>
            <person name="Dunn D.M."/>
            <person name="Green E.D."/>
            <person name="Blakesley R.W."/>
            <person name="Bouffard G.G."/>
            <person name="De Jong P.J."/>
            <person name="Osoegawa K."/>
            <person name="Zhu B."/>
            <person name="Marra M."/>
            <person name="Schein J."/>
            <person name="Bosdet I."/>
            <person name="Fjell C."/>
            <person name="Jones S."/>
            <person name="Krzywinski M."/>
            <person name="Mathewson C."/>
            <person name="Siddiqui A."/>
            <person name="Wye N."/>
            <person name="McPherson J."/>
            <person name="Zhao S."/>
            <person name="Fraser C.M."/>
            <person name="Shetty J."/>
            <person name="Shatsman S."/>
            <person name="Geer K."/>
            <person name="Chen Y."/>
            <person name="Abramzon S."/>
            <person name="Nierman W.C."/>
            <person name="Havlak P.H."/>
            <person name="Chen R."/>
            <person name="Durbin K.J."/>
            <person name="Egan A."/>
            <person name="Ren Y."/>
            <person name="Song X.-Z."/>
            <person name="Li B."/>
            <person name="Liu Y."/>
            <person name="Qin X."/>
            <person name="Cawley S."/>
            <person name="Cooney A.J."/>
            <person name="D'Souza L.M."/>
            <person name="Martin K."/>
            <person name="Wu J.Q."/>
            <person name="Gonzalez-Garay M.L."/>
            <person name="Jackson A.R."/>
            <person name="Kalafus K.J."/>
            <person name="McLeod M.P."/>
            <person name="Milosavljevic A."/>
            <person name="Virk D."/>
            <person name="Volkov A."/>
            <person name="Wheeler D.A."/>
            <person name="Zhang Z."/>
            <person name="Bailey J.A."/>
            <person name="Eichler E.E."/>
            <person name="Tuzun E."/>
            <person name="Birney E."/>
            <person name="Mongin E."/>
            <person name="Ureta-Vidal A."/>
            <person name="Woodwark C."/>
            <person name="Zdobnov E."/>
            <person name="Bork P."/>
            <person name="Suyama M."/>
            <person name="Torrents D."/>
            <person name="Alexandersson M."/>
            <person name="Trask B.J."/>
            <person name="Young J.M."/>
            <person name="Huang H."/>
            <person name="Wang H."/>
            <person name="Xing H."/>
            <person name="Daniels S."/>
            <person name="Gietzen D."/>
            <person name="Schmidt J."/>
            <person name="Stevens K."/>
            <person name="Vitt U."/>
            <person name="Wingrove J."/>
            <person name="Camara F."/>
            <person name="Mar Alba M."/>
            <person name="Abril J.F."/>
            <person name="Guigo R."/>
            <person name="Smit A."/>
            <person name="Dubchak I."/>
            <person name="Rubin E.M."/>
            <person name="Couronne O."/>
            <person name="Poliakov A."/>
            <person name="Huebner N."/>
            <person name="Ganten D."/>
            <person name="Goesele C."/>
            <person name="Hummel O."/>
            <person name="Kreitler T."/>
            <person name="Lee Y.-A."/>
            <person name="Monti J."/>
            <person name="Schulz H."/>
            <person name="Zimdahl H."/>
            <person name="Himmelbauer H."/>
            <person name="Lehrach H."/>
            <person name="Jacob H.J."/>
            <person name="Bromberg S."/>
            <person name="Gullings-Handley J."/>
            <person name="Jensen-Seaman M.I."/>
            <person name="Kwitek A.E."/>
            <person name="Lazar J."/>
            <person name="Pasko D."/>
            <person name="Tonellato P.J."/>
            <person name="Twigger S."/>
            <person name="Ponting C.P."/>
            <person name="Duarte J.M."/>
            <person name="Rice S."/>
            <person name="Goodstadt L."/>
            <person name="Beatson S.A."/>
            <person name="Emes R.D."/>
            <person name="Winter E.E."/>
            <person name="Webber C."/>
            <person name="Brandt P."/>
            <person name="Nyakatura G."/>
            <person name="Adetobi M."/>
            <person name="Chiaromonte F."/>
            <person name="Elnitski L."/>
            <person name="Eswara P."/>
            <person name="Hardison R.C."/>
            <person name="Hou M."/>
            <person name="Kolbe D."/>
            <person name="Makova K."/>
            <person name="Miller W."/>
            <person name="Nekrutenko A."/>
            <person name="Riemer C."/>
            <person name="Schwartz S."/>
            <person name="Taylor J."/>
            <person name="Yang S."/>
            <person name="Zhang Y."/>
            <person name="Lindpaintner K."/>
            <person name="Andrews T.D."/>
            <person name="Caccamo M."/>
            <person name="Clamp M."/>
            <person name="Clarke L."/>
            <person name="Curwen V."/>
            <person name="Durbin R.M."/>
            <person name="Eyras E."/>
            <person name="Searle S.M."/>
            <person name="Cooper G.M."/>
            <person name="Batzoglou S."/>
            <person name="Brudno M."/>
            <person name="Sidow A."/>
            <person name="Stone E.A."/>
            <person name="Payseur B.A."/>
            <person name="Bourque G."/>
            <person name="Lopez-Otin C."/>
            <person name="Puente X.S."/>
            <person name="Chakrabarti K."/>
            <person name="Chatterji S."/>
            <person name="Dewey C."/>
            <person name="Pachter L."/>
            <person name="Bray N."/>
            <person name="Yap V.B."/>
            <person name="Caspi A."/>
            <person name="Tesler G."/>
            <person name="Pevzner P.A."/>
            <person name="Haussler D."/>
            <person name="Roskin K.M."/>
            <person name="Baertsch R."/>
            <person name="Clawson H."/>
            <person name="Furey T.S."/>
            <person name="Hinrichs A.S."/>
            <person name="Karolchik D."/>
            <person name="Kent W.J."/>
            <person name="Rosenbloom K.R."/>
            <person name="Trumbower H."/>
            <person name="Weirauch M."/>
            <person name="Cooper D.N."/>
            <person name="Stenson P.D."/>
            <person name="Ma B."/>
            <person name="Brent M."/>
            <person name="Arumugam M."/>
            <person name="Shteynberg D."/>
            <person name="Copley R.R."/>
            <person name="Taylor M.S."/>
            <person name="Riethman H."/>
            <person name="Mudunuri U."/>
            <person name="Peterson J."/>
            <person name="Guyer M."/>
            <person name="Felsenfeld A."/>
            <person name="Old S."/>
            <person name="Mockrin S."/>
            <person name="Collins F.S."/>
        </authorList>
    </citation>
    <scope>NUCLEOTIDE SEQUENCE [LARGE SCALE GENOMIC DNA]</scope>
    <source>
        <strain evidence="14">Brown Norway</strain>
    </source>
</reference>
<reference evidence="13" key="2">
    <citation type="submission" date="2005-07" db="EMBL/GenBank/DDBJ databases">
        <authorList>
            <person name="Mural R.J."/>
            <person name="Adams M.D."/>
            <person name="Myers E.W."/>
            <person name="Smith H.O."/>
            <person name="Venter J.C."/>
        </authorList>
    </citation>
    <scope>NUCLEOTIDE SEQUENCE [LARGE SCALE GENOMIC DNA]</scope>
</reference>
<reference evidence="12" key="3">
    <citation type="journal article" date="2004" name="Genome Res.">
        <title>The status, quality, and expansion of the NIH full-length cDNA project: the Mammalian Gene Collection (MGC).</title>
        <authorList>
            <consortium name="The MGC Project Team"/>
        </authorList>
    </citation>
    <scope>NUCLEOTIDE SEQUENCE [LARGE SCALE MRNA]</scope>
    <source>
        <tissue evidence="12">Prostate</tissue>
    </source>
</reference>
<reference evidence="11" key="4">
    <citation type="journal article" date="2010" name="J. Neurosci.">
        <title>Pals1 is a major regulator of the epithelial-like polarization and the extension of the myelin sheath in peripheral nerves.</title>
        <authorList>
            <person name="Ozcelik M."/>
            <person name="Cotter L."/>
            <person name="Jacob C."/>
            <person name="Pereira J.A."/>
            <person name="Relvas J.B."/>
            <person name="Suter U."/>
            <person name="Tricaud N."/>
        </authorList>
    </citation>
    <scope>FUNCTION</scope>
</reference>
<reference evidence="16" key="5">
    <citation type="journal article" date="2012" name="Nat. Commun.">
        <title>Quantitative maps of protein phosphorylation sites across 14 different rat organs and tissues.</title>
        <authorList>
            <person name="Lundby A."/>
            <person name="Secher A."/>
            <person name="Lage K."/>
            <person name="Nordsborg N.B."/>
            <person name="Dmytriyev A."/>
            <person name="Lundby C."/>
            <person name="Olsen J.V."/>
        </authorList>
    </citation>
    <scope>IDENTIFICATION BY MASS SPECTROMETRY [LARGE SCALE ANALYSIS]</scope>
</reference>
<sequence>MTTSYMNGHVTEESDSGIKNLGLASPEEHPKHREMAVDCPGDLGTRLMPVRRSAQLERIRQQQEDMRRRREEEGKKQELDLNSSMRLKKLAQIPPKTGIDNPIFDTEEGIVLESPHYAVKILEVEDLFSSLKHIQHTLVDSQSQEDISLLLQLVQNRDFQNAFKIHNAVTVHMNKASPPFPLIANVQDLVQEVQTVLKPVHQKEGQELTALLNAPHIQALLLAHDKVAEQEMQLEPITDERVYESIGHYGGETVKIVRIEKARDIPLGATVRNEMDSVIISRIVKGGAAEKSGLLHEGDEVLEINGIEIRGKDVNEVFDLLSDMHGTLTFVLIPSQQIKPPPAKETVIHVKAHFDYDPSDDPYVPCRELGLSFQKGDILHVISQEDPNWWQAYREGDEDNQPLAGLVPGKSFQQQREAMKQTIEEDKEPEKSGKLWCAKKNKKKRKKVLYNANKNDDYDNEEILTYEEMSLYHQPANRKRPIILIGPQNCGQNELRQRLMNKEKDRFASAVPHTTRNRRDHEVAGRDYHFVSRQAFEADIAAGKFIEHGEFEKNLYGTSIDSVRQVINSGKICLLSLRAQSLKTLRNSDLKPYIIFIAPPSQERLRALLAKEGKNPKPEELREIIEKTREMEQNNGHYFDTAIVNSDLDKAYQELLRLINKLDTEPQWVPSTWLR</sequence>
<name>PALS1_RAT</name>
<organism evidence="14">
    <name type="scientific">Rattus norvegicus</name>
    <name type="common">Rat</name>
    <dbReference type="NCBI Taxonomy" id="10116"/>
    <lineage>
        <taxon>Eukaryota</taxon>
        <taxon>Metazoa</taxon>
        <taxon>Chordata</taxon>
        <taxon>Craniata</taxon>
        <taxon>Vertebrata</taxon>
        <taxon>Euteleostomi</taxon>
        <taxon>Mammalia</taxon>
        <taxon>Eutheria</taxon>
        <taxon>Euarchontoglires</taxon>
        <taxon>Glires</taxon>
        <taxon>Rodentia</taxon>
        <taxon>Myomorpha</taxon>
        <taxon>Muroidea</taxon>
        <taxon>Muridae</taxon>
        <taxon>Murinae</taxon>
        <taxon>Rattus</taxon>
    </lineage>
</organism>
<proteinExistence type="evidence at protein level"/>
<accession>B4F7E7</accession>
<comment type="function">
    <text evidence="2 3 9">Plays a role in tight junction biogenesis and in the establishment of cell polarity in epithelial cells (By similarity). Also involved in adherens junction biogenesis by ensuring correct localization of the exocyst complex protein EXOC4/SEC8 which allows trafficking of adherens junction structural component CDH1 to the cell surface (By similarity). Plays a role through its interaction with CDH5 in vascular lumen formation and endothelial membrane polarity (By similarity). Required during embryonic and postnatal retinal development (By similarity). Required for the maintenance of cerebellar progenitor cells in an undifferentiated proliferative state, preventing premature differentiation, and is required for cerebellar histogenesis, fissure formation, cerebellar layer organization and cortical development (By similarity). Plays a role in neuronal progenitor cell survival, potentially via promotion of mTOR signaling (By similarity). Plays a role in the radial and longitudinal extension of the myelin sheath in Schwann cells (By similarity). May modulate SC6A1/GAT1-mediated GABA uptake by stabilizing the transporter (By similarity). May play a role in the T-cell receptor-mediated activation of NF-kappa-B (By similarity). Required for localization of EZR to the apical membrane of parietal cells and may play a role in the dynamic remodeling of the apical cytoskeleton (By similarity). Required for the normal polarized localization of the vesicular marker STX4 (By similarity). Required for the correct trafficking of the myelin proteins PMP22 and MAG (PubMed:20237282). Involved in promoting phosphorylation and cytoplasmic retention of transcriptional coactivators YAP1 and WWTR1/TAZ which leads to suppression of TGFB1-dependent transcription of target genes such as CCN2/CTGF, SERPINE1/PAI1, SNAI1/SNAIL1 and SMAD7 (By similarity).</text>
</comment>
<comment type="subunit">
    <text evidence="1 2 3">Heterodimer with MPP1 (By similarity). Forms a heterotrimeric complex composed of PALS1, LIN7B and PATJ; the N-terminal L27 domain of PALS1 interacts with the L27 domain of PATJ and the C-terminal L27 domain of PALS1 interacts with the L27 domain of LIN7B (By similarity). Component of a complex composed of PALS1, CRB1 and MPP4 (By similarity). Component of a complex whose core is composed of ARHGAP17, AMOT, PALS1, PATJ and PARD3/PAR3 (By similarity). Component of a complex composed of PALS1, CRB1 and EPB41L5. Within the complex, interacts (via HOOK domain) with EPB41L5 (via FERM domain), and interacts with CRB1 (via intracellular domain) (By similarity). Component of a complex composed of PALS1, MPP3 and CRB1; PALS1 acts as a bridging protein between MPP3 (via guanylate kinase-like domain) and CRB1 (By similarity). Component of a complex composed of CRB3, PALS1 and PATJ (By similarity). As part of the Crumbs complex; interacts with WWP1, the interaction is enhanced by AMOTL2 and facilitates WWP1 localization to the plasma membrane (By similarity). The Crumbs complex promotes monoubiquitination of AMOTL2 by WWP1, which activates the Hippo signaling pathway (By similarity). Interacts (via PDZ domain) with PATJ (via N-terminus). Interacts with EZR (By similarity). Interacts (via PDZ domain) with CRB1 (via C-terminal ERLI motif) (By similarity). While the PDZ domain is sufficient for interaction with CRB1, the adjacent SH3 and guanylate kinase-like domains are likely to contribute to a high affinity interaction (By similarity). Interacts with WWTR1/TAZ (via WW domain) (By similarity). Interacts with MPP7 (By similarity). Interacts (via PDZ domain) with CRB3 (via C-terminus) (By similarity). Interacts with LIN7C. Interacts with MPDZ. Interacts with PARD6B. Interacts with SC6A1. Interacts with CDH5; the interaction promotes PALS1 localization to cell junctions and is required for CDH5-mediated vascular lumen formation and endothelial cell (By similarity). Interacts with NPHP1 (via coiled coil and SH3 domains) (By similarity). Interacts with NPHP4 (By similarity). Interacts with CRB2 (By similarity).</text>
</comment>
<comment type="subcellular location">
    <subcellularLocation>
        <location evidence="2">Golgi apparatus</location>
    </subcellularLocation>
    <subcellularLocation>
        <location evidence="3">Cell membrane</location>
        <topology evidence="3">Peripheral membrane protein</topology>
    </subcellularLocation>
    <subcellularLocation>
        <location evidence="3">Endomembrane system</location>
        <topology evidence="3">Peripheral membrane protein</topology>
    </subcellularLocation>
    <subcellularLocation>
        <location evidence="2">Cell junction</location>
        <location evidence="2">Tight junction</location>
    </subcellularLocation>
    <subcellularLocation>
        <location evidence="2">Cell junction</location>
        <location evidence="2">Adherens junction</location>
    </subcellularLocation>
    <subcellularLocation>
        <location evidence="3">Cell projection</location>
        <location evidence="3">Axon</location>
    </subcellularLocation>
    <subcellularLocation>
        <location evidence="3">Perikaryon</location>
    </subcellularLocation>
    <subcellularLocation>
        <location evidence="2">Apical cell membrane</location>
    </subcellularLocation>
    <text evidence="2 3">Localized to the tight junctions of epithelial cells (By similarity). Localized to the Golgi apparatus in T lymphocytes (By similarity). Localized to a subset of intracellular vesicles (By similarity). Localized to the Purkinje cell body and axon (By similarity). Localized to intercellular junctions in vascular endothelial cells (By similarity). Localized to Schmidt-Lanterman incisures, the adaxonal domain, and the inner part of paranodal loops in myelinating Schwann cells of the sciatic nerve (By similarity). Localized to apical membrane domains of the outer limiting membrane (OLM) junctions in the retina (By similarity). Colocalizes with CRB1 at the OLM, apical to the adherens junction (By similarity). Colocalizes with MPP1 in the retina at the OLM (By similarity). Colocalizes with MPP3 to the subapical region of adherens junctions in the retina OLM (By similarity).</text>
</comment>
<comment type="domain">
    <text evidence="3">The L27 domain 1 functions in targeting to the tight junctions by binding to and stabilizing PATJ.</text>
</comment>
<comment type="domain">
    <text evidence="3">The PDZ domain binds to the C-terminus of SC6A1.</text>
</comment>
<comment type="similarity">
    <text evidence="11">Belongs to the MAGUK family.</text>
</comment>
<evidence type="ECO:0000250" key="1">
    <source>
        <dbReference type="UniProtKB" id="E2QY99"/>
    </source>
</evidence>
<evidence type="ECO:0000250" key="2">
    <source>
        <dbReference type="UniProtKB" id="Q8N3R9"/>
    </source>
</evidence>
<evidence type="ECO:0000250" key="3">
    <source>
        <dbReference type="UniProtKB" id="Q9JLB2"/>
    </source>
</evidence>
<evidence type="ECO:0000255" key="4">
    <source>
        <dbReference type="PROSITE-ProRule" id="PRU00100"/>
    </source>
</evidence>
<evidence type="ECO:0000255" key="5">
    <source>
        <dbReference type="PROSITE-ProRule" id="PRU00143"/>
    </source>
</evidence>
<evidence type="ECO:0000255" key="6">
    <source>
        <dbReference type="PROSITE-ProRule" id="PRU00192"/>
    </source>
</evidence>
<evidence type="ECO:0000255" key="7">
    <source>
        <dbReference type="PROSITE-ProRule" id="PRU00365"/>
    </source>
</evidence>
<evidence type="ECO:0000256" key="8">
    <source>
        <dbReference type="SAM" id="MobiDB-lite"/>
    </source>
</evidence>
<evidence type="ECO:0000269" key="9">
    <source>
    </source>
</evidence>
<evidence type="ECO:0000303" key="10">
    <source>
    </source>
</evidence>
<evidence type="ECO:0000305" key="11"/>
<evidence type="ECO:0000312" key="12">
    <source>
        <dbReference type="EMBL" id="AAI68247.1"/>
    </source>
</evidence>
<evidence type="ECO:0000312" key="13">
    <source>
        <dbReference type="EMBL" id="EDM03700.1"/>
    </source>
</evidence>
<evidence type="ECO:0000312" key="14">
    <source>
        <dbReference type="Proteomes" id="UP000002494"/>
    </source>
</evidence>
<evidence type="ECO:0000312" key="15">
    <source>
        <dbReference type="RGD" id="1308071"/>
    </source>
</evidence>
<evidence type="ECO:0007744" key="16">
    <source>
    </source>
</evidence>
<gene>
    <name evidence="10" type="primary">Pals1</name>
    <name evidence="15" type="synonym">Mpp5</name>
</gene>
<protein>
    <recommendedName>
        <fullName evidence="11">Protein PALS1</fullName>
    </recommendedName>
    <alternativeName>
        <fullName evidence="11">MAGUK p55 subfamily member 5</fullName>
    </alternativeName>
    <alternativeName>
        <fullName>Protein associated with Lin-7 1</fullName>
    </alternativeName>
</protein>
<keyword id="KW-0067">ATP-binding</keyword>
<keyword id="KW-0965">Cell junction</keyword>
<keyword id="KW-1003">Cell membrane</keyword>
<keyword id="KW-0966">Cell projection</keyword>
<keyword id="KW-0333">Golgi apparatus</keyword>
<keyword id="KW-0418">Kinase</keyword>
<keyword id="KW-0472">Membrane</keyword>
<keyword id="KW-0547">Nucleotide-binding</keyword>
<keyword id="KW-0597">Phosphoprotein</keyword>
<keyword id="KW-1185">Reference proteome</keyword>
<keyword id="KW-0677">Repeat</keyword>
<keyword id="KW-0728">SH3 domain</keyword>
<keyword id="KW-0796">Tight junction</keyword>
<keyword id="KW-0808">Transferase</keyword>